<feature type="chain" id="PRO_0000142462" description="Eukaryotic translation initiation factor 5A">
    <location>
        <begin position="1"/>
        <end position="160"/>
    </location>
</feature>
<feature type="modified residue" description="Hypusine" evidence="2">
    <location>
        <position position="52"/>
    </location>
</feature>
<feature type="strand" evidence="4">
    <location>
        <begin position="18"/>
        <end position="23"/>
    </location>
</feature>
<feature type="helix" evidence="4">
    <location>
        <begin position="24"/>
        <end position="26"/>
    </location>
</feature>
<feature type="strand" evidence="4">
    <location>
        <begin position="32"/>
        <end position="35"/>
    </location>
</feature>
<feature type="strand" evidence="4">
    <location>
        <begin position="38"/>
        <end position="47"/>
    </location>
</feature>
<feature type="strand" evidence="4">
    <location>
        <begin position="52"/>
        <end position="54"/>
    </location>
</feature>
<feature type="strand" evidence="4">
    <location>
        <begin position="58"/>
        <end position="64"/>
    </location>
</feature>
<feature type="turn" evidence="4">
    <location>
        <begin position="65"/>
        <end position="67"/>
    </location>
</feature>
<feature type="strand" evidence="4">
    <location>
        <begin position="70"/>
        <end position="75"/>
    </location>
</feature>
<feature type="strand" evidence="4">
    <location>
        <begin position="77"/>
        <end position="84"/>
    </location>
</feature>
<feature type="strand" evidence="4">
    <location>
        <begin position="87"/>
        <end position="96"/>
    </location>
</feature>
<feature type="strand" evidence="4">
    <location>
        <begin position="100"/>
        <end position="105"/>
    </location>
</feature>
<feature type="helix" evidence="4">
    <location>
        <begin position="120"/>
        <end position="131"/>
    </location>
</feature>
<feature type="strand" evidence="4">
    <location>
        <begin position="135"/>
        <end position="143"/>
    </location>
</feature>
<feature type="strand" evidence="4">
    <location>
        <begin position="146"/>
        <end position="155"/>
    </location>
</feature>
<comment type="function">
    <text evidence="1">Translation factor that promotes translation elongation and termination, particularly upon ribosome stalling at specific amino acid sequence contexts. Binds between the exit (E) and peptidyl (P) site of the ribosome and promotes rescue of stalled ribosome: specifically required for efficient translation of polyproline-containing peptides as well as other motifs that stall the ribosome. Acts as a ribosome quality control (RQC) cofactor by joining the RQC complex to facilitate peptidyl transfer during CAT tailing step.</text>
</comment>
<comment type="subcellular location">
    <subcellularLocation>
        <location evidence="1">Cytoplasm</location>
    </subcellularLocation>
</comment>
<comment type="PTM">
    <text evidence="2">Lys-52 undergoes hypusination, a unique post-translational modification that consists in the addition of a butylamino group from spermidine to lysine side chain, leading to the formation of the unusual amino acid hypusine. eIF-5As are the only known proteins to undergo this modification, which is essential for their function.</text>
</comment>
<comment type="similarity">
    <text evidence="3">Belongs to the eIF-5A family.</text>
</comment>
<reference key="1">
    <citation type="journal article" date="1999" name="Insect Mol. Biol.">
        <title>Cloning and analysis of cDNAs encoding the hypusine-containing protein eIF5A of two lepidopteran insect species.</title>
        <authorList>
            <person name="van Oers M.M."/>
            <person name="van Marwijk M."/>
            <person name="Kwa M.S.G."/>
            <person name="Vlak J.M."/>
            <person name="Thomas A.A.M."/>
        </authorList>
    </citation>
    <scope>NUCLEOTIDE SEQUENCE [MRNA]</scope>
    <source>
        <tissue>Midgut</tissue>
        <tissue>Ovary</tissue>
    </source>
</reference>
<proteinExistence type="evidence at protein level"/>
<accession>P62925</accession>
<accession>Q9TVJ8</accession>
<protein>
    <recommendedName>
        <fullName>Eukaryotic translation initiation factor 5A</fullName>
        <shortName>eIF-5A</shortName>
    </recommendedName>
</protein>
<gene>
    <name type="primary">eIF-5A</name>
    <name type="synonym">eIF5A</name>
</gene>
<name>IF5A_SPOFR</name>
<sequence>MADIEDTHFETGDSGASATFPMQCSALRKNGFVMLKGRPCKIVEMSTSKTGKHGHAKVHLVGIDIFNGKKYEDICPSTHNMDVPHVKREDYQLTDISDDGYLTLMADNGDLREDLKIPDGDLGTQLRSDFDSGKELLCTVLKSCGEECVIAVKANTALDK</sequence>
<evidence type="ECO:0000250" key="1">
    <source>
        <dbReference type="UniProtKB" id="P23301"/>
    </source>
</evidence>
<evidence type="ECO:0000250" key="2">
    <source>
        <dbReference type="UniProtKB" id="P63241"/>
    </source>
</evidence>
<evidence type="ECO:0000305" key="3"/>
<evidence type="ECO:0007829" key="4">
    <source>
        <dbReference type="PDB" id="5HY6"/>
    </source>
</evidence>
<organism>
    <name type="scientific">Spodoptera frugiperda</name>
    <name type="common">Fall armyworm</name>
    <dbReference type="NCBI Taxonomy" id="7108"/>
    <lineage>
        <taxon>Eukaryota</taxon>
        <taxon>Metazoa</taxon>
        <taxon>Ecdysozoa</taxon>
        <taxon>Arthropoda</taxon>
        <taxon>Hexapoda</taxon>
        <taxon>Insecta</taxon>
        <taxon>Pterygota</taxon>
        <taxon>Neoptera</taxon>
        <taxon>Endopterygota</taxon>
        <taxon>Lepidoptera</taxon>
        <taxon>Glossata</taxon>
        <taxon>Ditrysia</taxon>
        <taxon>Noctuoidea</taxon>
        <taxon>Noctuidae</taxon>
        <taxon>Amphipyrinae</taxon>
        <taxon>Spodoptera</taxon>
    </lineage>
</organism>
<keyword id="KW-0002">3D-structure</keyword>
<keyword id="KW-0963">Cytoplasm</keyword>
<keyword id="KW-0251">Elongation factor</keyword>
<keyword id="KW-0385">Hypusine</keyword>
<keyword id="KW-0648">Protein biosynthesis</keyword>
<keyword id="KW-0694">RNA-binding</keyword>
<dbReference type="EMBL" id="AF109731">
    <property type="protein sequence ID" value="AAF13316.1"/>
    <property type="molecule type" value="mRNA"/>
</dbReference>
<dbReference type="PDB" id="5HY6">
    <property type="method" value="X-ray"/>
    <property type="resolution" value="2.19 A"/>
    <property type="chains" value="A=1-160"/>
</dbReference>
<dbReference type="PDBsum" id="5HY6"/>
<dbReference type="SMR" id="P62925"/>
<dbReference type="EnsemblMetazoa" id="XM_035587820.2">
    <property type="protein sequence ID" value="XP_035443713.1"/>
    <property type="gene ID" value="LOC118271679"/>
</dbReference>
<dbReference type="EnsemblMetazoa" id="XM_035587821.2">
    <property type="protein sequence ID" value="XP_035443714.1"/>
    <property type="gene ID" value="LOC118271679"/>
</dbReference>
<dbReference type="OrthoDB" id="9975114at2759"/>
<dbReference type="EvolutionaryTrace" id="P62925"/>
<dbReference type="Proteomes" id="UP000829999">
    <property type="component" value="Unplaced"/>
</dbReference>
<dbReference type="GO" id="GO:0005737">
    <property type="term" value="C:cytoplasm"/>
    <property type="evidence" value="ECO:0007669"/>
    <property type="project" value="UniProtKB-SubCell"/>
</dbReference>
<dbReference type="GO" id="GO:0043022">
    <property type="term" value="F:ribosome binding"/>
    <property type="evidence" value="ECO:0007669"/>
    <property type="project" value="InterPro"/>
</dbReference>
<dbReference type="GO" id="GO:0003723">
    <property type="term" value="F:RNA binding"/>
    <property type="evidence" value="ECO:0007669"/>
    <property type="project" value="UniProtKB-KW"/>
</dbReference>
<dbReference type="GO" id="GO:0003746">
    <property type="term" value="F:translation elongation factor activity"/>
    <property type="evidence" value="ECO:0007669"/>
    <property type="project" value="UniProtKB-KW"/>
</dbReference>
<dbReference type="GO" id="GO:0045901">
    <property type="term" value="P:positive regulation of translational elongation"/>
    <property type="evidence" value="ECO:0007669"/>
    <property type="project" value="InterPro"/>
</dbReference>
<dbReference type="GO" id="GO:0045905">
    <property type="term" value="P:positive regulation of translational termination"/>
    <property type="evidence" value="ECO:0007669"/>
    <property type="project" value="InterPro"/>
</dbReference>
<dbReference type="CDD" id="cd04468">
    <property type="entry name" value="S1_eIF5A"/>
    <property type="match status" value="1"/>
</dbReference>
<dbReference type="FunFam" id="2.30.30.30:FF:000007">
    <property type="entry name" value="Eukaryotic translation initiation factor 5A"/>
    <property type="match status" value="1"/>
</dbReference>
<dbReference type="FunFam" id="2.40.50.140:FF:000034">
    <property type="entry name" value="Eukaryotic translation initiation factor 5A"/>
    <property type="match status" value="1"/>
</dbReference>
<dbReference type="Gene3D" id="2.30.30.30">
    <property type="match status" value="1"/>
</dbReference>
<dbReference type="Gene3D" id="2.40.50.140">
    <property type="entry name" value="Nucleic acid-binding proteins"/>
    <property type="match status" value="1"/>
</dbReference>
<dbReference type="InterPro" id="IPR001884">
    <property type="entry name" value="IF5A-like"/>
</dbReference>
<dbReference type="InterPro" id="IPR048670">
    <property type="entry name" value="IF5A-like_N"/>
</dbReference>
<dbReference type="InterPro" id="IPR012340">
    <property type="entry name" value="NA-bd_OB-fold"/>
</dbReference>
<dbReference type="InterPro" id="IPR014722">
    <property type="entry name" value="Rib_uL2_dom2"/>
</dbReference>
<dbReference type="InterPro" id="IPR019769">
    <property type="entry name" value="Trans_elong_IF5A_hypusine_site"/>
</dbReference>
<dbReference type="InterPro" id="IPR020189">
    <property type="entry name" value="Transl_elong_IF5A_C"/>
</dbReference>
<dbReference type="InterPro" id="IPR008991">
    <property type="entry name" value="Translation_prot_SH3-like_sf"/>
</dbReference>
<dbReference type="NCBIfam" id="TIGR00037">
    <property type="entry name" value="eIF_5A"/>
    <property type="match status" value="1"/>
</dbReference>
<dbReference type="PANTHER" id="PTHR11673">
    <property type="entry name" value="TRANSLATION INITIATION FACTOR 5A FAMILY MEMBER"/>
    <property type="match status" value="1"/>
</dbReference>
<dbReference type="Pfam" id="PF01287">
    <property type="entry name" value="eIF-5a"/>
    <property type="match status" value="1"/>
</dbReference>
<dbReference type="Pfam" id="PF21485">
    <property type="entry name" value="IF5A-like_N"/>
    <property type="match status" value="1"/>
</dbReference>
<dbReference type="PIRSF" id="PIRSF003025">
    <property type="entry name" value="eIF5A"/>
    <property type="match status" value="1"/>
</dbReference>
<dbReference type="SMART" id="SM01376">
    <property type="entry name" value="eIF-5a"/>
    <property type="match status" value="1"/>
</dbReference>
<dbReference type="SUPFAM" id="SSF50249">
    <property type="entry name" value="Nucleic acid-binding proteins"/>
    <property type="match status" value="1"/>
</dbReference>
<dbReference type="SUPFAM" id="SSF50104">
    <property type="entry name" value="Translation proteins SH3-like domain"/>
    <property type="match status" value="1"/>
</dbReference>
<dbReference type="PROSITE" id="PS00302">
    <property type="entry name" value="IF5A_HYPUSINE"/>
    <property type="match status" value="1"/>
</dbReference>